<gene>
    <name type="ordered locus">BAB1_0281</name>
</gene>
<dbReference type="EC" id="3.6.1.9" evidence="1"/>
<dbReference type="EMBL" id="AM040264">
    <property type="protein sequence ID" value="CAJ10237.1"/>
    <property type="molecule type" value="Genomic_DNA"/>
</dbReference>
<dbReference type="RefSeq" id="WP_002965530.1">
    <property type="nucleotide sequence ID" value="NZ_KN046823.1"/>
</dbReference>
<dbReference type="SMR" id="Q2YPC2"/>
<dbReference type="STRING" id="359391.BAB1_0281"/>
<dbReference type="KEGG" id="bmf:BAB1_0281"/>
<dbReference type="PATRIC" id="fig|359391.11.peg.1700"/>
<dbReference type="HOGENOM" id="CLU_040416_2_0_5"/>
<dbReference type="PhylomeDB" id="Q2YPC2"/>
<dbReference type="Proteomes" id="UP000002719">
    <property type="component" value="Chromosome I"/>
</dbReference>
<dbReference type="GO" id="GO:0005737">
    <property type="term" value="C:cytoplasm"/>
    <property type="evidence" value="ECO:0007669"/>
    <property type="project" value="UniProtKB-SubCell"/>
</dbReference>
<dbReference type="GO" id="GO:0036218">
    <property type="term" value="F:dTTP diphosphatase activity"/>
    <property type="evidence" value="ECO:0007669"/>
    <property type="project" value="RHEA"/>
</dbReference>
<dbReference type="GO" id="GO:0036221">
    <property type="term" value="F:UTP diphosphatase activity"/>
    <property type="evidence" value="ECO:0007669"/>
    <property type="project" value="RHEA"/>
</dbReference>
<dbReference type="GO" id="GO:0009117">
    <property type="term" value="P:nucleotide metabolic process"/>
    <property type="evidence" value="ECO:0007669"/>
    <property type="project" value="UniProtKB-KW"/>
</dbReference>
<dbReference type="CDD" id="cd00555">
    <property type="entry name" value="Maf"/>
    <property type="match status" value="1"/>
</dbReference>
<dbReference type="Gene3D" id="3.90.950.10">
    <property type="match status" value="1"/>
</dbReference>
<dbReference type="HAMAP" id="MF_00528">
    <property type="entry name" value="Maf"/>
    <property type="match status" value="1"/>
</dbReference>
<dbReference type="InterPro" id="IPR029001">
    <property type="entry name" value="ITPase-like_fam"/>
</dbReference>
<dbReference type="InterPro" id="IPR003697">
    <property type="entry name" value="Maf-like"/>
</dbReference>
<dbReference type="NCBIfam" id="TIGR00172">
    <property type="entry name" value="maf"/>
    <property type="match status" value="1"/>
</dbReference>
<dbReference type="NCBIfam" id="NF002401">
    <property type="entry name" value="PRK01441.1"/>
    <property type="match status" value="1"/>
</dbReference>
<dbReference type="PANTHER" id="PTHR43213">
    <property type="entry name" value="BIFUNCTIONAL DTTP/UTP PYROPHOSPHATASE/METHYLTRANSFERASE PROTEIN-RELATED"/>
    <property type="match status" value="1"/>
</dbReference>
<dbReference type="PANTHER" id="PTHR43213:SF5">
    <property type="entry name" value="BIFUNCTIONAL DTTP_UTP PYROPHOSPHATASE_METHYLTRANSFERASE PROTEIN-RELATED"/>
    <property type="match status" value="1"/>
</dbReference>
<dbReference type="Pfam" id="PF02545">
    <property type="entry name" value="Maf"/>
    <property type="match status" value="1"/>
</dbReference>
<dbReference type="PIRSF" id="PIRSF006305">
    <property type="entry name" value="Maf"/>
    <property type="match status" value="1"/>
</dbReference>
<dbReference type="SUPFAM" id="SSF52972">
    <property type="entry name" value="ITPase-like"/>
    <property type="match status" value="1"/>
</dbReference>
<comment type="function">
    <text evidence="1">Nucleoside triphosphate pyrophosphatase that hydrolyzes dTTP and UTP. May have a dual role in cell division arrest and in preventing the incorporation of modified nucleotides into cellular nucleic acids.</text>
</comment>
<comment type="catalytic activity">
    <reaction evidence="1">
        <text>dTTP + H2O = dTMP + diphosphate + H(+)</text>
        <dbReference type="Rhea" id="RHEA:28534"/>
        <dbReference type="ChEBI" id="CHEBI:15377"/>
        <dbReference type="ChEBI" id="CHEBI:15378"/>
        <dbReference type="ChEBI" id="CHEBI:33019"/>
        <dbReference type="ChEBI" id="CHEBI:37568"/>
        <dbReference type="ChEBI" id="CHEBI:63528"/>
        <dbReference type="EC" id="3.6.1.9"/>
    </reaction>
</comment>
<comment type="catalytic activity">
    <reaction evidence="1">
        <text>UTP + H2O = UMP + diphosphate + H(+)</text>
        <dbReference type="Rhea" id="RHEA:29395"/>
        <dbReference type="ChEBI" id="CHEBI:15377"/>
        <dbReference type="ChEBI" id="CHEBI:15378"/>
        <dbReference type="ChEBI" id="CHEBI:33019"/>
        <dbReference type="ChEBI" id="CHEBI:46398"/>
        <dbReference type="ChEBI" id="CHEBI:57865"/>
        <dbReference type="EC" id="3.6.1.9"/>
    </reaction>
</comment>
<comment type="cofactor">
    <cofactor evidence="1">
        <name>a divalent metal cation</name>
        <dbReference type="ChEBI" id="CHEBI:60240"/>
    </cofactor>
</comment>
<comment type="subcellular location">
    <subcellularLocation>
        <location evidence="1">Cytoplasm</location>
    </subcellularLocation>
</comment>
<comment type="similarity">
    <text evidence="1">Belongs to the Maf family. YhdE subfamily.</text>
</comment>
<name>NTPPA_BRUA2</name>
<accession>Q2YPC2</accession>
<reference key="1">
    <citation type="journal article" date="2005" name="Infect. Immun.">
        <title>Whole-genome analyses of speciation events in pathogenic Brucellae.</title>
        <authorList>
            <person name="Chain P.S."/>
            <person name="Comerci D.J."/>
            <person name="Tolmasky M.E."/>
            <person name="Larimer F.W."/>
            <person name="Malfatti S.A."/>
            <person name="Vergez L.M."/>
            <person name="Aguero F."/>
            <person name="Land M.L."/>
            <person name="Ugalde R.A."/>
            <person name="Garcia E."/>
        </authorList>
    </citation>
    <scope>NUCLEOTIDE SEQUENCE [LARGE SCALE GENOMIC DNA]</scope>
    <source>
        <strain>2308</strain>
    </source>
</reference>
<sequence>MNVQHKLVLASGSPRRIELLGQAGIEPDRIHPADIDETPQRAEHPRSLARRLSRDKARKAHEQLQGEAGFSGALVLAADTVVAVGRRILPKAEIEDEARECLRLLSGRTHKVFTGVCLVLPNGNLRQTLVETRLRFERLSRLQINAYLSSGEWRGKAGGYAIQGLAGSFVVKLVGSYTNVVGLPLQETVGLLADGGYPVYANWGTGKV</sequence>
<organism>
    <name type="scientific">Brucella abortus (strain 2308)</name>
    <dbReference type="NCBI Taxonomy" id="359391"/>
    <lineage>
        <taxon>Bacteria</taxon>
        <taxon>Pseudomonadati</taxon>
        <taxon>Pseudomonadota</taxon>
        <taxon>Alphaproteobacteria</taxon>
        <taxon>Hyphomicrobiales</taxon>
        <taxon>Brucellaceae</taxon>
        <taxon>Brucella/Ochrobactrum group</taxon>
        <taxon>Brucella</taxon>
    </lineage>
</organism>
<keyword id="KW-0963">Cytoplasm</keyword>
<keyword id="KW-0378">Hydrolase</keyword>
<keyword id="KW-0546">Nucleotide metabolism</keyword>
<keyword id="KW-1185">Reference proteome</keyword>
<feature type="chain" id="PRO_0000267261" description="dTTP/UTP pyrophosphatase">
    <location>
        <begin position="1"/>
        <end position="208"/>
    </location>
</feature>
<feature type="region of interest" description="Disordered" evidence="2">
    <location>
        <begin position="28"/>
        <end position="48"/>
    </location>
</feature>
<feature type="active site" description="Proton acceptor" evidence="1">
    <location>
        <position position="79"/>
    </location>
</feature>
<feature type="site" description="Important for substrate specificity" evidence="1">
    <location>
        <position position="15"/>
    </location>
</feature>
<feature type="site" description="Important for substrate specificity" evidence="1">
    <location>
        <position position="80"/>
    </location>
</feature>
<feature type="site" description="Important for substrate specificity" evidence="1">
    <location>
        <position position="163"/>
    </location>
</feature>
<evidence type="ECO:0000255" key="1">
    <source>
        <dbReference type="HAMAP-Rule" id="MF_00528"/>
    </source>
</evidence>
<evidence type="ECO:0000256" key="2">
    <source>
        <dbReference type="SAM" id="MobiDB-lite"/>
    </source>
</evidence>
<protein>
    <recommendedName>
        <fullName evidence="1">dTTP/UTP pyrophosphatase</fullName>
        <shortName evidence="1">dTTPase/UTPase</shortName>
        <ecNumber evidence="1">3.6.1.9</ecNumber>
    </recommendedName>
    <alternativeName>
        <fullName evidence="1">Nucleoside triphosphate pyrophosphatase</fullName>
    </alternativeName>
    <alternativeName>
        <fullName evidence="1">Nucleotide pyrophosphatase</fullName>
        <shortName evidence="1">Nucleotide PPase</shortName>
    </alternativeName>
</protein>
<proteinExistence type="inferred from homology"/>